<protein>
    <recommendedName>
        <fullName evidence="23 24 25">Bifunctional peptidase and arginyl-hydroxylase JMJD5</fullName>
        <ecNumber evidence="12">1.14.11.73</ecNumber>
        <ecNumber evidence="9 11">3.4.-.-</ecNumber>
    </recommendedName>
    <alternativeName>
        <fullName evidence="17">JmjC domain-containing protein 5</fullName>
    </alternativeName>
    <alternativeName>
        <fullName evidence="17">Jumonji C domain-containing protein 5</fullName>
    </alternativeName>
    <alternativeName>
        <fullName evidence="25">L-arginine (3R)-hydroxylase KDM8</fullName>
    </alternativeName>
</protein>
<gene>
    <name evidence="15 18 26" type="primary">KDM8</name>
    <name evidence="16 17 18" type="synonym">JMJD5</name>
</gene>
<proteinExistence type="evidence at protein level"/>
<feature type="chain" id="PRO_0000292010" description="Bifunctional peptidase and arginyl-hydroxylase JMJD5">
    <location>
        <begin position="1"/>
        <end position="416"/>
    </location>
</feature>
<feature type="domain" description="JmjC" evidence="2">
    <location>
        <begin position="271"/>
        <end position="416"/>
    </location>
</feature>
<feature type="region of interest" description="Interaction with RCCD1" evidence="7">
    <location>
        <begin position="1"/>
        <end position="110"/>
    </location>
</feature>
<feature type="binding site" evidence="11">
    <location>
        <position position="238"/>
    </location>
    <ligand>
        <name>a protein</name>
        <dbReference type="ChEBI" id="CHEBI:16541"/>
    </ligand>
    <ligandPart>
        <name>N(omega)-methyl-L-arginine residue</name>
        <dbReference type="ChEBI" id="CHEBI:65280"/>
    </ligandPart>
</feature>
<feature type="binding site" evidence="4 11 12 22 27 29 30 31">
    <location>
        <position position="272"/>
    </location>
    <ligand>
        <name>2-oxoglutarate</name>
        <dbReference type="ChEBI" id="CHEBI:16810"/>
    </ligand>
</feature>
<feature type="binding site" evidence="11">
    <location>
        <position position="275"/>
    </location>
    <ligand>
        <name>a protein</name>
        <dbReference type="ChEBI" id="CHEBI:16541"/>
    </ligand>
    <ligandPart>
        <name>N(omega),N(omega)'-dimethyl-L-arginine residue</name>
        <dbReference type="ChEBI" id="CHEBI:88221"/>
    </ligandPart>
</feature>
<feature type="binding site" evidence="11">
    <location>
        <position position="275"/>
    </location>
    <ligand>
        <name>a protein</name>
        <dbReference type="ChEBI" id="CHEBI:16541"/>
    </ligand>
    <ligandPart>
        <name>N(omega)-methyl-L-arginine residue</name>
        <dbReference type="ChEBI" id="CHEBI:65280"/>
    </ligandPart>
</feature>
<feature type="binding site" evidence="4 11 12 22 27 29 30 31">
    <location>
        <position position="318"/>
    </location>
    <ligand>
        <name>2-oxoglutarate</name>
        <dbReference type="ChEBI" id="CHEBI:16810"/>
    </ligand>
</feature>
<feature type="binding site" evidence="11">
    <location>
        <position position="318"/>
    </location>
    <ligand>
        <name>a protein</name>
        <dbReference type="ChEBI" id="CHEBI:16541"/>
    </ligand>
    <ligandPart>
        <name>N(omega),N(omega)'-dimethyl-L-arginine residue</name>
        <dbReference type="ChEBI" id="CHEBI:88221"/>
    </ligandPart>
</feature>
<feature type="binding site" evidence="11">
    <location>
        <position position="318"/>
    </location>
    <ligand>
        <name>a protein</name>
        <dbReference type="ChEBI" id="CHEBI:16541"/>
    </ligand>
    <ligandPart>
        <name>N(omega)-methyl-L-arginine residue</name>
        <dbReference type="ChEBI" id="CHEBI:65280"/>
    </ligandPart>
</feature>
<feature type="binding site" evidence="12">
    <location>
        <position position="321"/>
    </location>
    <ligand>
        <name>2-oxoglutarate</name>
        <dbReference type="ChEBI" id="CHEBI:16810"/>
    </ligand>
</feature>
<feature type="binding site" evidence="2 21 22 28 29">
    <location>
        <position position="321"/>
    </location>
    <ligand>
        <name>Fe cation</name>
        <dbReference type="ChEBI" id="CHEBI:24875"/>
        <note>catalytic</note>
    </ligand>
</feature>
<feature type="binding site" evidence="2 21 22 28 29">
    <location>
        <position position="323"/>
    </location>
    <ligand>
        <name>Fe cation</name>
        <dbReference type="ChEBI" id="CHEBI:24875"/>
        <note>catalytic</note>
    </ligand>
</feature>
<feature type="binding site" evidence="4 11 12 22 27 29 30 31">
    <location>
        <position position="327"/>
    </location>
    <ligand>
        <name>2-oxoglutarate</name>
        <dbReference type="ChEBI" id="CHEBI:16810"/>
    </ligand>
</feature>
<feature type="binding site" evidence="4 11 12 22 27 29 30 31">
    <location>
        <position position="336"/>
    </location>
    <ligand>
        <name>2-oxoglutarate</name>
        <dbReference type="ChEBI" id="CHEBI:16810"/>
    </ligand>
</feature>
<feature type="binding site" evidence="12">
    <location>
        <position position="400"/>
    </location>
    <ligand>
        <name>2-oxoglutarate</name>
        <dbReference type="ChEBI" id="CHEBI:16810"/>
    </ligand>
</feature>
<feature type="binding site" evidence="2 21 22 28 29">
    <location>
        <position position="400"/>
    </location>
    <ligand>
        <name>Fe cation</name>
        <dbReference type="ChEBI" id="CHEBI:24875"/>
        <note>catalytic</note>
    </ligand>
</feature>
<feature type="binding site" evidence="4 11 12 27 29">
    <location>
        <position position="414"/>
    </location>
    <ligand>
        <name>2-oxoglutarate</name>
        <dbReference type="ChEBI" id="CHEBI:16810"/>
    </ligand>
</feature>
<feature type="splice variant" id="VSP_039893" description="In isoform 3." evidence="14">
    <original>M</original>
    <variation>MSREKCSPGEGAEEGRGSEASGLKASAGHGTEPAGGGPM</variation>
    <location>
        <position position="1"/>
    </location>
</feature>
<feature type="splice variant" id="VSP_026370" description="In isoform 2." evidence="19">
    <location>
        <begin position="167"/>
        <end position="362"/>
    </location>
</feature>
<feature type="sequence variant" id="VAR_032928" description="In dbSNP:rs34445573.">
    <original>E</original>
    <variation>D</variation>
    <location>
        <position position="302"/>
    </location>
</feature>
<feature type="mutagenesis site" description="No effect on L-arginyl 3-hydroxylase activity toward RPS6." evidence="12">
    <location>
        <begin position="1"/>
        <end position="182"/>
    </location>
</feature>
<feature type="mutagenesis site" description="Loss of L-arginyl 3-hydroxylase activity toward RPS6." evidence="12">
    <original>E</original>
    <variation>A</variation>
    <location>
        <position position="238"/>
    </location>
</feature>
<feature type="mutagenesis site" description="Loss of L-arginyl 3-hydroxylase activity toward RPS6." evidence="12">
    <original>Y</original>
    <variation>A</variation>
    <location>
        <position position="243"/>
    </location>
</feature>
<feature type="mutagenesis site" description="Loss of L-arginyl 3-hydroxylase activity toward RPS6. Loss of peptidase activity toward methylated histones." evidence="11 12">
    <original>Q</original>
    <variation>A</variation>
    <location>
        <position position="275"/>
    </location>
</feature>
<feature type="mutagenesis site" description="Loss of L-arginyl 3-hydroxylase activity toward RPS6." evidence="12">
    <original>W</original>
    <variation>A</variation>
    <location>
        <position position="310"/>
    </location>
</feature>
<feature type="mutagenesis site" description="Fails to cleave H3C1." evidence="10">
    <original>HQD</original>
    <variation>AQA</variation>
    <location>
        <begin position="321"/>
        <end position="323"/>
    </location>
</feature>
<feature type="mutagenesis site" description="Loss of H3K36me2 demethylase activity." evidence="3">
    <original>H</original>
    <variation>A</variation>
    <location>
        <position position="321"/>
    </location>
</feature>
<feature type="mutagenesis site" description="Loss of L-arginyl 3-hydroxylase activity toward RPS6. Loss of peptidase activity toward methylated histones; when associated with A-323 and A-400. No effect on its regulatory function on the circadian clock or CRY1 stability." evidence="9 12 13">
    <original>H</original>
    <variation>A</variation>
    <location>
        <position position="321"/>
    </location>
</feature>
<feature type="mutagenesis site" description="Loss of peptidase activity toward methylated histones; when associated with A-321 and A-400." evidence="9">
    <original>D</original>
    <variation>A</variation>
    <location>
        <position position="323"/>
    </location>
</feature>
<feature type="mutagenesis site" description="Loss of interaction with H3C1. Fails to cleave H3C1." evidence="10">
    <original>RK</original>
    <variation>AA</variation>
    <location>
        <begin position="335"/>
        <end position="336"/>
    </location>
</feature>
<feature type="mutagenesis site" description="Loss of peptidase activity toward methylated histones." evidence="11">
    <original>K</original>
    <variation>E</variation>
    <location>
        <position position="336"/>
    </location>
</feature>
<feature type="mutagenesis site" description="Reduces L-arginyl 3-hydroxylase activity toward RPS6 substrate." evidence="12">
    <original>L</original>
    <variation>A</variation>
    <location>
        <position position="356"/>
    </location>
</feature>
<feature type="mutagenesis site" description="Fails to cleave H3C1." evidence="10">
    <original>YWH</original>
    <variation>AAA</variation>
    <location>
        <begin position="398"/>
        <end position="400"/>
    </location>
</feature>
<feature type="mutagenesis site" description="Loss of peptidase activity toward methylated histones; when associated with A-321 and A-323." evidence="9">
    <original>H</original>
    <variation>A</variation>
    <location>
        <position position="400"/>
    </location>
</feature>
<feature type="mutagenesis site" description="Reduces L-arginyl 3-hydroxylase activity toward RPS6." evidence="12">
    <original>W</original>
    <variation>A</variation>
    <location>
        <position position="414"/>
    </location>
</feature>
<feature type="sequence conflict" description="In Ref. 1; BAB14706." evidence="20" ref="1">
    <original>D</original>
    <variation>G</variation>
    <location>
        <position position="73"/>
    </location>
</feature>
<feature type="helix" evidence="32">
    <location>
        <begin position="178"/>
        <end position="180"/>
    </location>
</feature>
<feature type="strand" evidence="33">
    <location>
        <begin position="181"/>
        <end position="183"/>
    </location>
</feature>
<feature type="strand" evidence="34">
    <location>
        <begin position="186"/>
        <end position="189"/>
    </location>
</feature>
<feature type="helix" evidence="34">
    <location>
        <begin position="192"/>
        <end position="198"/>
    </location>
</feature>
<feature type="turn" evidence="34">
    <location>
        <begin position="199"/>
        <end position="203"/>
    </location>
</feature>
<feature type="strand" evidence="34">
    <location>
        <begin position="206"/>
        <end position="212"/>
    </location>
</feature>
<feature type="helix" evidence="34">
    <location>
        <begin position="216"/>
        <end position="220"/>
    </location>
</feature>
<feature type="helix" evidence="34">
    <location>
        <begin position="223"/>
        <end position="230"/>
    </location>
</feature>
<feature type="strand" evidence="34">
    <location>
        <begin position="233"/>
        <end position="239"/>
    </location>
</feature>
<feature type="strand" evidence="35">
    <location>
        <begin position="245"/>
        <end position="247"/>
    </location>
</feature>
<feature type="strand" evidence="34">
    <location>
        <begin position="249"/>
        <end position="254"/>
    </location>
</feature>
<feature type="helix" evidence="34">
    <location>
        <begin position="255"/>
        <end position="262"/>
    </location>
</feature>
<feature type="strand" evidence="34">
    <location>
        <begin position="271"/>
        <end position="276"/>
    </location>
</feature>
<feature type="helix" evidence="34">
    <location>
        <begin position="278"/>
        <end position="281"/>
    </location>
</feature>
<feature type="helix" evidence="34">
    <location>
        <begin position="283"/>
        <end position="286"/>
    </location>
</feature>
<feature type="helix" evidence="34">
    <location>
        <begin position="293"/>
        <end position="297"/>
    </location>
</feature>
<feature type="strand" evidence="34">
    <location>
        <begin position="298"/>
        <end position="300"/>
    </location>
</feature>
<feature type="helix" evidence="34">
    <location>
        <begin position="302"/>
        <end position="304"/>
    </location>
</feature>
<feature type="strand" evidence="34">
    <location>
        <begin position="306"/>
        <end position="312"/>
    </location>
</feature>
<feature type="strand" evidence="34">
    <location>
        <begin position="317"/>
        <end position="321"/>
    </location>
</feature>
<feature type="strand" evidence="34">
    <location>
        <begin position="324"/>
        <end position="334"/>
    </location>
</feature>
<feature type="strand" evidence="34">
    <location>
        <begin position="336"/>
        <end position="341"/>
    </location>
</feature>
<feature type="helix" evidence="34">
    <location>
        <begin position="343"/>
        <end position="348"/>
    </location>
</feature>
<feature type="turn" evidence="34">
    <location>
        <begin position="355"/>
        <end position="359"/>
    </location>
</feature>
<feature type="strand" evidence="34">
    <location>
        <begin position="360"/>
        <end position="363"/>
    </location>
</feature>
<feature type="turn" evidence="34">
    <location>
        <begin position="370"/>
        <end position="372"/>
    </location>
</feature>
<feature type="helix" evidence="34">
    <location>
        <begin position="374"/>
        <end position="378"/>
    </location>
</feature>
<feature type="strand" evidence="34">
    <location>
        <begin position="382"/>
        <end position="386"/>
    </location>
</feature>
<feature type="strand" evidence="34">
    <location>
        <begin position="391"/>
        <end position="394"/>
    </location>
</feature>
<feature type="strand" evidence="34">
    <location>
        <begin position="399"/>
        <end position="415"/>
    </location>
</feature>
<dbReference type="EC" id="1.14.11.73" evidence="12"/>
<dbReference type="EC" id="3.4.-.-" evidence="9 11"/>
<dbReference type="EMBL" id="AK023860">
    <property type="protein sequence ID" value="BAB14706.1"/>
    <property type="molecule type" value="mRNA"/>
</dbReference>
<dbReference type="EMBL" id="AK297166">
    <property type="protein sequence ID" value="BAG59661.1"/>
    <property type="molecule type" value="mRNA"/>
</dbReference>
<dbReference type="EMBL" id="AY345239">
    <property type="protein sequence ID" value="AAQ23080.1"/>
    <property type="molecule type" value="mRNA"/>
</dbReference>
<dbReference type="EMBL" id="AC092725">
    <property type="status" value="NOT_ANNOTATED_CDS"/>
    <property type="molecule type" value="Genomic_DNA"/>
</dbReference>
<dbReference type="EMBL" id="AC106739">
    <property type="status" value="NOT_ANNOTATED_CDS"/>
    <property type="molecule type" value="Genomic_DNA"/>
</dbReference>
<dbReference type="EMBL" id="AC109449">
    <property type="status" value="NOT_ANNOTATED_CDS"/>
    <property type="molecule type" value="Genomic_DNA"/>
</dbReference>
<dbReference type="EMBL" id="BC027911">
    <property type="protein sequence ID" value="AAH27911.1"/>
    <property type="molecule type" value="mRNA"/>
</dbReference>
<dbReference type="CCDS" id="CCDS10627.1">
    <molecule id="Q8N371-1"/>
</dbReference>
<dbReference type="CCDS" id="CCDS45448.1">
    <molecule id="Q8N371-3"/>
</dbReference>
<dbReference type="RefSeq" id="NP_001138820.1">
    <molecule id="Q8N371-3"/>
    <property type="nucleotide sequence ID" value="NM_001145348.2"/>
</dbReference>
<dbReference type="RefSeq" id="NP_079049.2">
    <molecule id="Q8N371-1"/>
    <property type="nucleotide sequence ID" value="NM_024773.3"/>
</dbReference>
<dbReference type="PDB" id="3UYJ">
    <property type="method" value="X-ray"/>
    <property type="resolution" value="2.35 A"/>
    <property type="chains" value="A/B=173-416"/>
</dbReference>
<dbReference type="PDB" id="4AAP">
    <property type="method" value="X-ray"/>
    <property type="resolution" value="2.60 A"/>
    <property type="chains" value="A/B=180-416"/>
</dbReference>
<dbReference type="PDB" id="4GAZ">
    <property type="method" value="X-ray"/>
    <property type="resolution" value="2.81 A"/>
    <property type="chains" value="A/B=176-416"/>
</dbReference>
<dbReference type="PDB" id="4GJY">
    <property type="method" value="X-ray"/>
    <property type="resolution" value="1.25 A"/>
    <property type="chains" value="A=183-416"/>
</dbReference>
<dbReference type="PDB" id="4GJZ">
    <property type="method" value="X-ray"/>
    <property type="resolution" value="1.05 A"/>
    <property type="chains" value="A=183-416"/>
</dbReference>
<dbReference type="PDB" id="4QU1">
    <property type="method" value="X-ray"/>
    <property type="resolution" value="1.57 A"/>
    <property type="chains" value="A=183-416"/>
</dbReference>
<dbReference type="PDB" id="5FBJ">
    <property type="method" value="X-ray"/>
    <property type="resolution" value="2.42 A"/>
    <property type="chains" value="A=183-416"/>
</dbReference>
<dbReference type="PDB" id="6AVS">
    <property type="method" value="X-ray"/>
    <property type="resolution" value="2.02 A"/>
    <property type="chains" value="A=183-416"/>
</dbReference>
<dbReference type="PDB" id="6AX3">
    <property type="method" value="X-ray"/>
    <property type="resolution" value="2.25 A"/>
    <property type="chains" value="A=184-416"/>
</dbReference>
<dbReference type="PDB" id="6F4M">
    <property type="method" value="X-ray"/>
    <property type="resolution" value="1.71 A"/>
    <property type="chains" value="A=183-416"/>
</dbReference>
<dbReference type="PDB" id="6F4N">
    <property type="method" value="X-ray"/>
    <property type="resolution" value="2.54 A"/>
    <property type="chains" value="A/B=153-416"/>
</dbReference>
<dbReference type="PDB" id="6F4O">
    <property type="method" value="X-ray"/>
    <property type="resolution" value="1.28 A"/>
    <property type="chains" value="A=183-416"/>
</dbReference>
<dbReference type="PDB" id="6F4P">
    <property type="method" value="X-ray"/>
    <property type="resolution" value="1.45 A"/>
    <property type="chains" value="A=183-416"/>
</dbReference>
<dbReference type="PDB" id="6F4Q">
    <property type="method" value="X-ray"/>
    <property type="resolution" value="1.12 A"/>
    <property type="chains" value="A=183-416"/>
</dbReference>
<dbReference type="PDB" id="6F4R">
    <property type="method" value="X-ray"/>
    <property type="resolution" value="1.30 A"/>
    <property type="chains" value="A=183-416"/>
</dbReference>
<dbReference type="PDB" id="6F4S">
    <property type="method" value="X-ray"/>
    <property type="resolution" value="1.46 A"/>
    <property type="chains" value="A=183-416"/>
</dbReference>
<dbReference type="PDB" id="6F4T">
    <property type="method" value="X-ray"/>
    <property type="resolution" value="1.22 A"/>
    <property type="chains" value="A=183-416"/>
</dbReference>
<dbReference type="PDB" id="6I9L">
    <property type="method" value="X-ray"/>
    <property type="resolution" value="1.53 A"/>
    <property type="chains" value="A=183-416"/>
</dbReference>
<dbReference type="PDB" id="6I9M">
    <property type="method" value="X-ray"/>
    <property type="resolution" value="1.65 A"/>
    <property type="chains" value="A=183-416"/>
</dbReference>
<dbReference type="PDB" id="6I9N">
    <property type="method" value="X-ray"/>
    <property type="resolution" value="1.36 A"/>
    <property type="chains" value="A=183-416"/>
</dbReference>
<dbReference type="PDB" id="7DYT">
    <property type="method" value="X-ray"/>
    <property type="resolution" value="1.62 A"/>
    <property type="chains" value="A=183-416"/>
</dbReference>
<dbReference type="PDB" id="7DYU">
    <property type="method" value="X-ray"/>
    <property type="resolution" value="1.72 A"/>
    <property type="chains" value="A=183-416"/>
</dbReference>
<dbReference type="PDB" id="7DYV">
    <property type="method" value="X-ray"/>
    <property type="resolution" value="1.92 A"/>
    <property type="chains" value="A=183-416"/>
</dbReference>
<dbReference type="PDB" id="7DYW">
    <property type="method" value="X-ray"/>
    <property type="resolution" value="2.13 A"/>
    <property type="chains" value="A=183-416"/>
</dbReference>
<dbReference type="PDB" id="7DYX">
    <property type="method" value="X-ray"/>
    <property type="resolution" value="2.27 A"/>
    <property type="chains" value="A=183-416"/>
</dbReference>
<dbReference type="PDB" id="7UQ3">
    <property type="method" value="X-ray"/>
    <property type="resolution" value="1.49 A"/>
    <property type="chains" value="A=183-416"/>
</dbReference>
<dbReference type="PDBsum" id="3UYJ"/>
<dbReference type="PDBsum" id="4AAP"/>
<dbReference type="PDBsum" id="4GAZ"/>
<dbReference type="PDBsum" id="4GJY"/>
<dbReference type="PDBsum" id="4GJZ"/>
<dbReference type="PDBsum" id="4QU1"/>
<dbReference type="PDBsum" id="5FBJ"/>
<dbReference type="PDBsum" id="6AVS"/>
<dbReference type="PDBsum" id="6AX3"/>
<dbReference type="PDBsum" id="6F4M"/>
<dbReference type="PDBsum" id="6F4N"/>
<dbReference type="PDBsum" id="6F4O"/>
<dbReference type="PDBsum" id="6F4P"/>
<dbReference type="PDBsum" id="6F4Q"/>
<dbReference type="PDBsum" id="6F4R"/>
<dbReference type="PDBsum" id="6F4S"/>
<dbReference type="PDBsum" id="6F4T"/>
<dbReference type="PDBsum" id="6I9L"/>
<dbReference type="PDBsum" id="6I9M"/>
<dbReference type="PDBsum" id="6I9N"/>
<dbReference type="PDBsum" id="7DYT"/>
<dbReference type="PDBsum" id="7DYU"/>
<dbReference type="PDBsum" id="7DYV"/>
<dbReference type="PDBsum" id="7DYW"/>
<dbReference type="PDBsum" id="7DYX"/>
<dbReference type="PDBsum" id="7UQ3"/>
<dbReference type="SMR" id="Q8N371"/>
<dbReference type="BioGRID" id="122923">
    <property type="interactions" value="50"/>
</dbReference>
<dbReference type="CORUM" id="Q8N371"/>
<dbReference type="FunCoup" id="Q8N371">
    <property type="interactions" value="2153"/>
</dbReference>
<dbReference type="IntAct" id="Q8N371">
    <property type="interactions" value="22"/>
</dbReference>
<dbReference type="MINT" id="Q8N371"/>
<dbReference type="STRING" id="9606.ENSP00000398410"/>
<dbReference type="BindingDB" id="Q8N371"/>
<dbReference type="ChEMBL" id="CHEMBL4523396"/>
<dbReference type="iPTMnet" id="Q8N371"/>
<dbReference type="PhosphoSitePlus" id="Q8N371"/>
<dbReference type="BioMuta" id="KDM8"/>
<dbReference type="DMDM" id="74728780"/>
<dbReference type="jPOST" id="Q8N371"/>
<dbReference type="MassIVE" id="Q8N371"/>
<dbReference type="PaxDb" id="9606-ENSP00000398410"/>
<dbReference type="PeptideAtlas" id="Q8N371"/>
<dbReference type="ProteomicsDB" id="71772">
    <molecule id="Q8N371-1"/>
</dbReference>
<dbReference type="ProteomicsDB" id="71773">
    <molecule id="Q8N371-2"/>
</dbReference>
<dbReference type="ProteomicsDB" id="71774">
    <molecule id="Q8N371-3"/>
</dbReference>
<dbReference type="Pumba" id="Q8N371"/>
<dbReference type="ABCD" id="Q8N371">
    <property type="antibodies" value="1 sequenced antibody"/>
</dbReference>
<dbReference type="Antibodypedia" id="12808">
    <property type="antibodies" value="311 antibodies from 32 providers"/>
</dbReference>
<dbReference type="DNASU" id="79831"/>
<dbReference type="Ensembl" id="ENST00000286096.9">
    <molecule id="Q8N371-1"/>
    <property type="protein sequence ID" value="ENSP00000286096.5"/>
    <property type="gene ID" value="ENSG00000155666.12"/>
</dbReference>
<dbReference type="Ensembl" id="ENST00000441782.6">
    <molecule id="Q8N371-3"/>
    <property type="protein sequence ID" value="ENSP00000398410.2"/>
    <property type="gene ID" value="ENSG00000155666.12"/>
</dbReference>
<dbReference type="Ensembl" id="ENST00000568965.1">
    <molecule id="Q8N371-2"/>
    <property type="protein sequence ID" value="ENSP00000456901.1"/>
    <property type="gene ID" value="ENSG00000155666.12"/>
</dbReference>
<dbReference type="GeneID" id="79831"/>
<dbReference type="KEGG" id="hsa:79831"/>
<dbReference type="MANE-Select" id="ENST00000286096.9">
    <property type="protein sequence ID" value="ENSP00000286096.5"/>
    <property type="RefSeq nucleotide sequence ID" value="NM_024773.3"/>
    <property type="RefSeq protein sequence ID" value="NP_079049.2"/>
</dbReference>
<dbReference type="UCSC" id="uc002doh.3">
    <molecule id="Q8N371-1"/>
    <property type="organism name" value="human"/>
</dbReference>
<dbReference type="AGR" id="HGNC:25840"/>
<dbReference type="CTD" id="79831"/>
<dbReference type="DisGeNET" id="79831"/>
<dbReference type="GeneCards" id="KDM8"/>
<dbReference type="HGNC" id="HGNC:25840">
    <property type="gene designation" value="KDM8"/>
</dbReference>
<dbReference type="HPA" id="ENSG00000155666">
    <property type="expression patterns" value="Tissue enriched (liver)"/>
</dbReference>
<dbReference type="MIM" id="611917">
    <property type="type" value="gene"/>
</dbReference>
<dbReference type="neXtProt" id="NX_Q8N371"/>
<dbReference type="OpenTargets" id="ENSG00000155666"/>
<dbReference type="PharmGKB" id="PA143485510"/>
<dbReference type="VEuPathDB" id="HostDB:ENSG00000155666"/>
<dbReference type="eggNOG" id="KOG2132">
    <property type="taxonomic scope" value="Eukaryota"/>
</dbReference>
<dbReference type="GeneTree" id="ENSGT00940000158074"/>
<dbReference type="HOGENOM" id="CLU_016785_0_3_1"/>
<dbReference type="InParanoid" id="Q8N371"/>
<dbReference type="OrthoDB" id="47172at2759"/>
<dbReference type="PAN-GO" id="Q8N371">
    <property type="GO annotations" value="3 GO annotations based on evolutionary models"/>
</dbReference>
<dbReference type="PhylomeDB" id="Q8N371"/>
<dbReference type="TreeFam" id="TF315056"/>
<dbReference type="BioCyc" id="MetaCyc:ENSG00000155666-MONOMER"/>
<dbReference type="BRENDA" id="1.14.11.27">
    <property type="organism ID" value="2681"/>
</dbReference>
<dbReference type="BRENDA" id="1.14.11.73">
    <property type="organism ID" value="2681"/>
</dbReference>
<dbReference type="PathwayCommons" id="Q8N371"/>
<dbReference type="Reactome" id="R-HSA-9629569">
    <property type="pathway name" value="Protein hydroxylation"/>
</dbReference>
<dbReference type="SABIO-RK" id="Q8N371"/>
<dbReference type="SignaLink" id="Q8N371"/>
<dbReference type="BioGRID-ORCS" id="79831">
    <property type="hits" value="392 hits in 1196 CRISPR screens"/>
</dbReference>
<dbReference type="ChiTaRS" id="KDM8">
    <property type="organism name" value="human"/>
</dbReference>
<dbReference type="EvolutionaryTrace" id="Q8N371"/>
<dbReference type="GenomeRNAi" id="79831"/>
<dbReference type="Pharos" id="Q8N371">
    <property type="development level" value="Tbio"/>
</dbReference>
<dbReference type="PRO" id="PR:Q8N371"/>
<dbReference type="Proteomes" id="UP000005640">
    <property type="component" value="Chromosome 16"/>
</dbReference>
<dbReference type="RNAct" id="Q8N371">
    <property type="molecule type" value="protein"/>
</dbReference>
<dbReference type="Bgee" id="ENSG00000155666">
    <property type="expression patterns" value="Expressed in right lobe of liver and 110 other cell types or tissues"/>
</dbReference>
<dbReference type="ExpressionAtlas" id="Q8N371">
    <property type="expression patterns" value="baseline and differential"/>
</dbReference>
<dbReference type="GO" id="GO:0005694">
    <property type="term" value="C:chromosome"/>
    <property type="evidence" value="ECO:0007669"/>
    <property type="project" value="UniProtKB-SubCell"/>
</dbReference>
<dbReference type="GO" id="GO:0005829">
    <property type="term" value="C:cytosol"/>
    <property type="evidence" value="ECO:0000314"/>
    <property type="project" value="HPA"/>
</dbReference>
<dbReference type="GO" id="GO:0005654">
    <property type="term" value="C:nucleoplasm"/>
    <property type="evidence" value="ECO:0000314"/>
    <property type="project" value="HPA"/>
</dbReference>
<dbReference type="GO" id="GO:0005634">
    <property type="term" value="C:nucleus"/>
    <property type="evidence" value="ECO:0000314"/>
    <property type="project" value="UniProtKB"/>
</dbReference>
<dbReference type="GO" id="GO:0004177">
    <property type="term" value="F:aminopeptidase activity"/>
    <property type="evidence" value="ECO:0000314"/>
    <property type="project" value="UniProtKB"/>
</dbReference>
<dbReference type="GO" id="GO:0003682">
    <property type="term" value="F:chromatin binding"/>
    <property type="evidence" value="ECO:0000314"/>
    <property type="project" value="UniProtKB"/>
</dbReference>
<dbReference type="GO" id="GO:0004175">
    <property type="term" value="F:endopeptidase activity"/>
    <property type="evidence" value="ECO:0000314"/>
    <property type="project" value="GO_Central"/>
</dbReference>
<dbReference type="GO" id="GO:0051864">
    <property type="term" value="F:histone H3K36 demethylase activity"/>
    <property type="evidence" value="ECO:0000314"/>
    <property type="project" value="UniProtKB"/>
</dbReference>
<dbReference type="GO" id="GO:0046872">
    <property type="term" value="F:metal ion binding"/>
    <property type="evidence" value="ECO:0007669"/>
    <property type="project" value="UniProtKB-KW"/>
</dbReference>
<dbReference type="GO" id="GO:0002039">
    <property type="term" value="F:p53 binding"/>
    <property type="evidence" value="ECO:0007669"/>
    <property type="project" value="Ensembl"/>
</dbReference>
<dbReference type="GO" id="GO:0106157">
    <property type="term" value="F:peptidyl-arginine 3-dioxygenase activity"/>
    <property type="evidence" value="ECO:0000314"/>
    <property type="project" value="UniProtKB"/>
</dbReference>
<dbReference type="GO" id="GO:0032922">
    <property type="term" value="P:circadian regulation of gene expression"/>
    <property type="evidence" value="ECO:0000250"/>
    <property type="project" value="UniProtKB"/>
</dbReference>
<dbReference type="GO" id="GO:0048144">
    <property type="term" value="P:fibroblast proliferation"/>
    <property type="evidence" value="ECO:0007669"/>
    <property type="project" value="Ensembl"/>
</dbReference>
<dbReference type="GO" id="GO:0000086">
    <property type="term" value="P:G2/M transition of mitotic cell cycle"/>
    <property type="evidence" value="ECO:0000315"/>
    <property type="project" value="UniProtKB"/>
</dbReference>
<dbReference type="GO" id="GO:0001701">
    <property type="term" value="P:in utero embryonic development"/>
    <property type="evidence" value="ECO:0007669"/>
    <property type="project" value="Ensembl"/>
</dbReference>
<dbReference type="GO" id="GO:0045892">
    <property type="term" value="P:negative regulation of DNA-templated transcription"/>
    <property type="evidence" value="ECO:0000315"/>
    <property type="project" value="UniProtKB"/>
</dbReference>
<dbReference type="GO" id="GO:0045893">
    <property type="term" value="P:positive regulation of DNA-templated transcription"/>
    <property type="evidence" value="ECO:0000315"/>
    <property type="project" value="UniProtKB"/>
</dbReference>
<dbReference type="GO" id="GO:0031648">
    <property type="term" value="P:protein destabilization"/>
    <property type="evidence" value="ECO:0000315"/>
    <property type="project" value="UniProtKB"/>
</dbReference>
<dbReference type="GO" id="GO:0006508">
    <property type="term" value="P:proteolysis"/>
    <property type="evidence" value="ECO:0007669"/>
    <property type="project" value="UniProtKB-KW"/>
</dbReference>
<dbReference type="GO" id="GO:1901796">
    <property type="term" value="P:regulation of signal transduction by p53 class mediator"/>
    <property type="evidence" value="ECO:0007669"/>
    <property type="project" value="Ensembl"/>
</dbReference>
<dbReference type="FunFam" id="2.60.120.650:FF:000019">
    <property type="entry name" value="Bifunctional peptidase and arginyl-hydroxylase JMJD5"/>
    <property type="match status" value="1"/>
</dbReference>
<dbReference type="Gene3D" id="2.60.120.650">
    <property type="entry name" value="Cupin"/>
    <property type="match status" value="1"/>
</dbReference>
<dbReference type="InterPro" id="IPR056520">
    <property type="entry name" value="ARM_KDM8_N"/>
</dbReference>
<dbReference type="InterPro" id="IPR041667">
    <property type="entry name" value="Cupin_8"/>
</dbReference>
<dbReference type="InterPro" id="IPR003347">
    <property type="entry name" value="JmjC_dom"/>
</dbReference>
<dbReference type="PANTHER" id="PTHR12461:SF106">
    <property type="entry name" value="BIFUNCTIONAL PEPTIDASE AND ARGINYL-HYDROXYLASE JMJD5"/>
    <property type="match status" value="1"/>
</dbReference>
<dbReference type="PANTHER" id="PTHR12461">
    <property type="entry name" value="HYPOXIA-INDUCIBLE FACTOR 1 ALPHA INHIBITOR-RELATED"/>
    <property type="match status" value="1"/>
</dbReference>
<dbReference type="Pfam" id="PF24472">
    <property type="entry name" value="ARM_KDM8_N"/>
    <property type="match status" value="1"/>
</dbReference>
<dbReference type="Pfam" id="PF13621">
    <property type="entry name" value="Cupin_8"/>
    <property type="match status" value="1"/>
</dbReference>
<dbReference type="SMART" id="SM00558">
    <property type="entry name" value="JmjC"/>
    <property type="match status" value="1"/>
</dbReference>
<dbReference type="SUPFAM" id="SSF51197">
    <property type="entry name" value="Clavaminate synthase-like"/>
    <property type="match status" value="1"/>
</dbReference>
<dbReference type="PROSITE" id="PS51184">
    <property type="entry name" value="JMJC"/>
    <property type="match status" value="1"/>
</dbReference>
<reference key="1">
    <citation type="journal article" date="2004" name="Nat. Genet.">
        <title>Complete sequencing and characterization of 21,243 full-length human cDNAs.</title>
        <authorList>
            <person name="Ota T."/>
            <person name="Suzuki Y."/>
            <person name="Nishikawa T."/>
            <person name="Otsuki T."/>
            <person name="Sugiyama T."/>
            <person name="Irie R."/>
            <person name="Wakamatsu A."/>
            <person name="Hayashi K."/>
            <person name="Sato H."/>
            <person name="Nagai K."/>
            <person name="Kimura K."/>
            <person name="Makita H."/>
            <person name="Sekine M."/>
            <person name="Obayashi M."/>
            <person name="Nishi T."/>
            <person name="Shibahara T."/>
            <person name="Tanaka T."/>
            <person name="Ishii S."/>
            <person name="Yamamoto J."/>
            <person name="Saito K."/>
            <person name="Kawai Y."/>
            <person name="Isono Y."/>
            <person name="Nakamura Y."/>
            <person name="Nagahari K."/>
            <person name="Murakami K."/>
            <person name="Yasuda T."/>
            <person name="Iwayanagi T."/>
            <person name="Wagatsuma M."/>
            <person name="Shiratori A."/>
            <person name="Sudo H."/>
            <person name="Hosoiri T."/>
            <person name="Kaku Y."/>
            <person name="Kodaira H."/>
            <person name="Kondo H."/>
            <person name="Sugawara M."/>
            <person name="Takahashi M."/>
            <person name="Kanda K."/>
            <person name="Yokoi T."/>
            <person name="Furuya T."/>
            <person name="Kikkawa E."/>
            <person name="Omura Y."/>
            <person name="Abe K."/>
            <person name="Kamihara K."/>
            <person name="Katsuta N."/>
            <person name="Sato K."/>
            <person name="Tanikawa M."/>
            <person name="Yamazaki M."/>
            <person name="Ninomiya K."/>
            <person name="Ishibashi T."/>
            <person name="Yamashita H."/>
            <person name="Murakawa K."/>
            <person name="Fujimori K."/>
            <person name="Tanai H."/>
            <person name="Kimata M."/>
            <person name="Watanabe M."/>
            <person name="Hiraoka S."/>
            <person name="Chiba Y."/>
            <person name="Ishida S."/>
            <person name="Ono Y."/>
            <person name="Takiguchi S."/>
            <person name="Watanabe S."/>
            <person name="Yosida M."/>
            <person name="Hotuta T."/>
            <person name="Kusano J."/>
            <person name="Kanehori K."/>
            <person name="Takahashi-Fujii A."/>
            <person name="Hara H."/>
            <person name="Tanase T.-O."/>
            <person name="Nomura Y."/>
            <person name="Togiya S."/>
            <person name="Komai F."/>
            <person name="Hara R."/>
            <person name="Takeuchi K."/>
            <person name="Arita M."/>
            <person name="Imose N."/>
            <person name="Musashino K."/>
            <person name="Yuuki H."/>
            <person name="Oshima A."/>
            <person name="Sasaki N."/>
            <person name="Aotsuka S."/>
            <person name="Yoshikawa Y."/>
            <person name="Matsunawa H."/>
            <person name="Ichihara T."/>
            <person name="Shiohata N."/>
            <person name="Sano S."/>
            <person name="Moriya S."/>
            <person name="Momiyama H."/>
            <person name="Satoh N."/>
            <person name="Takami S."/>
            <person name="Terashima Y."/>
            <person name="Suzuki O."/>
            <person name="Nakagawa S."/>
            <person name="Senoh A."/>
            <person name="Mizoguchi H."/>
            <person name="Goto Y."/>
            <person name="Shimizu F."/>
            <person name="Wakebe H."/>
            <person name="Hishigaki H."/>
            <person name="Watanabe T."/>
            <person name="Sugiyama A."/>
            <person name="Takemoto M."/>
            <person name="Kawakami B."/>
            <person name="Yamazaki M."/>
            <person name="Watanabe K."/>
            <person name="Kumagai A."/>
            <person name="Itakura S."/>
            <person name="Fukuzumi Y."/>
            <person name="Fujimori Y."/>
            <person name="Komiyama M."/>
            <person name="Tashiro H."/>
            <person name="Tanigami A."/>
            <person name="Fujiwara T."/>
            <person name="Ono T."/>
            <person name="Yamada K."/>
            <person name="Fujii Y."/>
            <person name="Ozaki K."/>
            <person name="Hirao M."/>
            <person name="Ohmori Y."/>
            <person name="Kawabata A."/>
            <person name="Hikiji T."/>
            <person name="Kobatake N."/>
            <person name="Inagaki H."/>
            <person name="Ikema Y."/>
            <person name="Okamoto S."/>
            <person name="Okitani R."/>
            <person name="Kawakami T."/>
            <person name="Noguchi S."/>
            <person name="Itoh T."/>
            <person name="Shigeta K."/>
            <person name="Senba T."/>
            <person name="Matsumura K."/>
            <person name="Nakajima Y."/>
            <person name="Mizuno T."/>
            <person name="Morinaga M."/>
            <person name="Sasaki M."/>
            <person name="Togashi T."/>
            <person name="Oyama M."/>
            <person name="Hata H."/>
            <person name="Watanabe M."/>
            <person name="Komatsu T."/>
            <person name="Mizushima-Sugano J."/>
            <person name="Satoh T."/>
            <person name="Shirai Y."/>
            <person name="Takahashi Y."/>
            <person name="Nakagawa K."/>
            <person name="Okumura K."/>
            <person name="Nagase T."/>
            <person name="Nomura N."/>
            <person name="Kikuchi H."/>
            <person name="Masuho Y."/>
            <person name="Yamashita R."/>
            <person name="Nakai K."/>
            <person name="Yada T."/>
            <person name="Nakamura Y."/>
            <person name="Ohara O."/>
            <person name="Isogai T."/>
            <person name="Sugano S."/>
        </authorList>
    </citation>
    <scope>NUCLEOTIDE SEQUENCE [LARGE SCALE MRNA] (ISOFORMS 1 AND 3)</scope>
    <source>
        <tissue>Brain</tissue>
        <tissue>Thyroid</tissue>
    </source>
</reference>
<reference key="2">
    <citation type="submission" date="2003-07" db="EMBL/GenBank/DDBJ databases">
        <authorList>
            <person name="Li H."/>
            <person name="Yu R."/>
            <person name="Zheng G."/>
            <person name="Zhou G."/>
            <person name="Ke R."/>
            <person name="Shen C."/>
            <person name="Zhong G."/>
            <person name="Lin L."/>
            <person name="Yang S."/>
        </authorList>
    </citation>
    <scope>NUCLEOTIDE SEQUENCE [LARGE SCALE MRNA] (ISOFORM 2)</scope>
</reference>
<reference key="3">
    <citation type="journal article" date="2004" name="Nature">
        <title>The sequence and analysis of duplication-rich human chromosome 16.</title>
        <authorList>
            <person name="Martin J."/>
            <person name="Han C."/>
            <person name="Gordon L.A."/>
            <person name="Terry A."/>
            <person name="Prabhakar S."/>
            <person name="She X."/>
            <person name="Xie G."/>
            <person name="Hellsten U."/>
            <person name="Chan Y.M."/>
            <person name="Altherr M."/>
            <person name="Couronne O."/>
            <person name="Aerts A."/>
            <person name="Bajorek E."/>
            <person name="Black S."/>
            <person name="Blumer H."/>
            <person name="Branscomb E."/>
            <person name="Brown N.C."/>
            <person name="Bruno W.J."/>
            <person name="Buckingham J.M."/>
            <person name="Callen D.F."/>
            <person name="Campbell C.S."/>
            <person name="Campbell M.L."/>
            <person name="Campbell E.W."/>
            <person name="Caoile C."/>
            <person name="Challacombe J.F."/>
            <person name="Chasteen L.A."/>
            <person name="Chertkov O."/>
            <person name="Chi H.C."/>
            <person name="Christensen M."/>
            <person name="Clark L.M."/>
            <person name="Cohn J.D."/>
            <person name="Denys M."/>
            <person name="Detter J.C."/>
            <person name="Dickson M."/>
            <person name="Dimitrijevic-Bussod M."/>
            <person name="Escobar J."/>
            <person name="Fawcett J.J."/>
            <person name="Flowers D."/>
            <person name="Fotopulos D."/>
            <person name="Glavina T."/>
            <person name="Gomez M."/>
            <person name="Gonzales E."/>
            <person name="Goodstein D."/>
            <person name="Goodwin L.A."/>
            <person name="Grady D.L."/>
            <person name="Grigoriev I."/>
            <person name="Groza M."/>
            <person name="Hammon N."/>
            <person name="Hawkins T."/>
            <person name="Haydu L."/>
            <person name="Hildebrand C.E."/>
            <person name="Huang W."/>
            <person name="Israni S."/>
            <person name="Jett J."/>
            <person name="Jewett P.B."/>
            <person name="Kadner K."/>
            <person name="Kimball H."/>
            <person name="Kobayashi A."/>
            <person name="Krawczyk M.-C."/>
            <person name="Leyba T."/>
            <person name="Longmire J.L."/>
            <person name="Lopez F."/>
            <person name="Lou Y."/>
            <person name="Lowry S."/>
            <person name="Ludeman T."/>
            <person name="Manohar C.F."/>
            <person name="Mark G.A."/>
            <person name="McMurray K.L."/>
            <person name="Meincke L.J."/>
            <person name="Morgan J."/>
            <person name="Moyzis R.K."/>
            <person name="Mundt M.O."/>
            <person name="Munk A.C."/>
            <person name="Nandkeshwar R.D."/>
            <person name="Pitluck S."/>
            <person name="Pollard M."/>
            <person name="Predki P."/>
            <person name="Parson-Quintana B."/>
            <person name="Ramirez L."/>
            <person name="Rash S."/>
            <person name="Retterer J."/>
            <person name="Ricke D.O."/>
            <person name="Robinson D.L."/>
            <person name="Rodriguez A."/>
            <person name="Salamov A."/>
            <person name="Saunders E.H."/>
            <person name="Scott D."/>
            <person name="Shough T."/>
            <person name="Stallings R.L."/>
            <person name="Stalvey M."/>
            <person name="Sutherland R.D."/>
            <person name="Tapia R."/>
            <person name="Tesmer J.G."/>
            <person name="Thayer N."/>
            <person name="Thompson L.S."/>
            <person name="Tice H."/>
            <person name="Torney D.C."/>
            <person name="Tran-Gyamfi M."/>
            <person name="Tsai M."/>
            <person name="Ulanovsky L.E."/>
            <person name="Ustaszewska A."/>
            <person name="Vo N."/>
            <person name="White P.S."/>
            <person name="Williams A.L."/>
            <person name="Wills P.L."/>
            <person name="Wu J.-R."/>
            <person name="Wu K."/>
            <person name="Yang J."/>
            <person name="DeJong P."/>
            <person name="Bruce D."/>
            <person name="Doggett N.A."/>
            <person name="Deaven L."/>
            <person name="Schmutz J."/>
            <person name="Grimwood J."/>
            <person name="Richardson P."/>
            <person name="Rokhsar D.S."/>
            <person name="Eichler E.E."/>
            <person name="Gilna P."/>
            <person name="Lucas S.M."/>
            <person name="Myers R.M."/>
            <person name="Rubin E.M."/>
            <person name="Pennacchio L.A."/>
        </authorList>
    </citation>
    <scope>NUCLEOTIDE SEQUENCE [LARGE SCALE GENOMIC DNA]</scope>
</reference>
<reference key="4">
    <citation type="journal article" date="2004" name="Genome Res.">
        <title>The status, quality, and expansion of the NIH full-length cDNA project: the Mammalian Gene Collection (MGC).</title>
        <authorList>
            <consortium name="The MGC Project Team"/>
        </authorList>
    </citation>
    <scope>NUCLEOTIDE SEQUENCE [LARGE SCALE MRNA] (ISOFORM 1)</scope>
    <source>
        <tissue>Lung</tissue>
    </source>
</reference>
<reference key="5">
    <citation type="journal article" date="2010" name="Proc. Natl. Acad. Sci. U.S.A.">
        <title>KDM8, a H3K36me2 histone demethylase that acts in the cyclin A1 coding region to regulate cancer cell proliferation.</title>
        <authorList>
            <person name="Hsia D.A."/>
            <person name="Tepper C.G."/>
            <person name="Pochampalli M.R."/>
            <person name="Hsia E.Y."/>
            <person name="Izumiya C."/>
            <person name="Huerta S.B."/>
            <person name="Wright M.E."/>
            <person name="Chen H.W."/>
            <person name="Kung H.J."/>
            <person name="Izumiya Y."/>
        </authorList>
    </citation>
    <scope>FUNCTION</scope>
    <scope>SUBCELLULAR LOCATION</scope>
    <scope>TISSUE SPECIFICITY</scope>
    <scope>MUTAGENESIS OF HIS-321</scope>
    <scope>CAUTION</scope>
</reference>
<reference key="6">
    <citation type="journal article" date="2014" name="Cell Rep.">
        <title>Human-chromatin-related protein interactions identify a demethylase complex required for chromosome segregation.</title>
        <authorList>
            <person name="Marcon E."/>
            <person name="Ni Z."/>
            <person name="Pu S."/>
            <person name="Turinsky A.L."/>
            <person name="Trimble S.S."/>
            <person name="Olsen J.B."/>
            <person name="Silverman-Gavrila R."/>
            <person name="Silverman-Gavrila L."/>
            <person name="Phanse S."/>
            <person name="Guo H."/>
            <person name="Zhong G."/>
            <person name="Guo X."/>
            <person name="Young P."/>
            <person name="Bailey S."/>
            <person name="Roudeva D."/>
            <person name="Zhao D."/>
            <person name="Hewel J."/>
            <person name="Li J."/>
            <person name="Graeslund S."/>
            <person name="Paduch M."/>
            <person name="Kossiakoff A.A."/>
            <person name="Lupien M."/>
            <person name="Emili A."/>
            <person name="Wodak S.J."/>
            <person name="Greenblatt J."/>
        </authorList>
    </citation>
    <scope>FUNCTION</scope>
    <scope>COFACTOR</scope>
    <scope>IDENTIFICATION IN A COMPLEX WITH RCCD1</scope>
    <scope>INTERACTION WITH RCCD1</scope>
    <scope>SUBCELLULAR LOCATION</scope>
    <scope>IDENTIFICATION BY MASS SPECTROMETRY</scope>
    <scope>CAUTION</scope>
</reference>
<reference key="7">
    <citation type="journal article" date="2014" name="Stem Cells">
        <title>JMJD5 regulates cell cycle and pluripotency in human embryonic stem cells.</title>
        <authorList>
            <person name="Zhu H."/>
            <person name="Hu S."/>
            <person name="Baker J."/>
        </authorList>
    </citation>
    <scope>FUNCTION</scope>
    <scope>TISSUE SPECIFICITY</scope>
</reference>
<reference key="8">
    <citation type="journal article" date="2017" name="Cancer Lett.">
        <title>RCCD1 depletion attenuates TGF-beta-induced EMT and cell migration by stabilizing cytoskeletal microtubules in NSCLC cells.</title>
        <authorList>
            <person name="Wu J."/>
            <person name="He Z."/>
            <person name="Yang X.M."/>
            <person name="Li K.L."/>
            <person name="Wang D.L."/>
            <person name="Sun F.L."/>
        </authorList>
    </citation>
    <scope>FUNCTION</scope>
    <scope>INTERACTION WITH RCCD1</scope>
</reference>
<reference key="9">
    <citation type="journal article" date="2017" name="EMBO Rep.">
        <title>JMJD5 cleaves monomethylated histone H3 N-tail under DNA damaging stress.</title>
        <authorList>
            <person name="Shen J."/>
            <person name="Xiang X."/>
            <person name="Chen L."/>
            <person name="Wang H."/>
            <person name="Wu L."/>
            <person name="Sun Y."/>
            <person name="Ma L."/>
            <person name="Gu X."/>
            <person name="Liu H."/>
            <person name="Wang L."/>
            <person name="Yu Y.N."/>
            <person name="Shao J."/>
            <person name="Huang C."/>
            <person name="Chin Y.E."/>
        </authorList>
    </citation>
    <scope>FUNCTION</scope>
    <scope>COFACTOR</scope>
    <scope>SUBUNIT</scope>
    <scope>INTERACTION WITH H3C1</scope>
    <scope>SUBCELLULAR LOCATION</scope>
    <scope>INDUCTION</scope>
    <scope>MUTAGENESIS OF 321-HIS--ASP-323; 335-ARG-LYS-336 AND 398-TRP--HIS-400</scope>
    <scope>CAUTION</scope>
</reference>
<reference key="10">
    <citation type="journal article" date="2017" name="Proc. Natl. Acad. Sci. U.S.A.">
        <title>Clipping of arginine-methylated histone tails by JMJD5 and JMJD7.</title>
        <authorList>
            <person name="Liu H."/>
            <person name="Wang C."/>
            <person name="Lee S."/>
            <person name="Deng Y."/>
            <person name="Wither M."/>
            <person name="Oh S."/>
            <person name="Ning F."/>
            <person name="Dege C."/>
            <person name="Zhang Q."/>
            <person name="Liu X."/>
            <person name="Johnson A.M."/>
            <person name="Zang J."/>
            <person name="Chen Z."/>
            <person name="Janknecht R."/>
            <person name="Hansen K."/>
            <person name="Marrack P."/>
            <person name="Li C.Y."/>
            <person name="Kappler J.W."/>
            <person name="Hagman J."/>
            <person name="Zhang G."/>
        </authorList>
    </citation>
    <scope>FUNCTION</scope>
    <scope>MUTAGENESIS OF HIS-321; ASP-323 AND HIS-400</scope>
</reference>
<reference key="11">
    <citation type="journal article" date="2018" name="PLoS Biol.">
        <title>JMJD5 links CRY1 function and proteasomal degradation.</title>
        <authorList>
            <person name="Saran A.R."/>
            <person name="Kalinowska D."/>
            <person name="Oh S."/>
            <person name="Janknecht R."/>
            <person name="DiTacchio L."/>
        </authorList>
    </citation>
    <scope>FUNCTION</scope>
    <scope>MUTAGENESIS OF HIS-321</scope>
</reference>
<reference key="12">
    <citation type="journal article" date="2018" name="Nat. Commun.">
        <title>JMJD5 is a human L-arginyl C-3 hydroxylase.</title>
        <authorList>
            <person name="Wilkins S.E."/>
            <person name="Islam S."/>
            <person name="Gannon J.M."/>
            <person name="Markolovic S."/>
            <person name="Hopkinson R.J."/>
            <person name="Ge W."/>
            <person name="Schofield C.J."/>
            <person name="Chowdhury R."/>
        </authorList>
    </citation>
    <scope>X-RAY CRYSTALLOGRAPHY (1.12 ANGSTROMS) OF 183-416 IN COMPLEX WITH 2-OXOGLUTARIC ACID</scope>
    <scope>CATALYTIC ACTIVITY</scope>
    <scope>BIOPHYSICOCHEMICAL PROPERTIES</scope>
    <scope>MUTAGENESIS OF GLU-238; TYR-243; GLN-275; TRP-310; HIS-321; LEU-356; TRP-414 AND 1-MET--LYS-182</scope>
    <scope>FUNCTION</scope>
    <scope>COFACTOR</scope>
</reference>
<reference key="13">
    <citation type="journal article" date="2018" name="Sci. Rep.">
        <title>Specific Recognition of Arginine Methylated Histone Tails by JMJD5 and JMJD7.</title>
        <authorList>
            <person name="Liu H."/>
            <person name="Wang C."/>
            <person name="Lee S."/>
            <person name="Ning F."/>
            <person name="Wang Y."/>
            <person name="Zhang Q."/>
            <person name="Chen Z."/>
            <person name="Zang J."/>
            <person name="Nix J."/>
            <person name="Dai S."/>
            <person name="Marrack P."/>
            <person name="Hagman J."/>
            <person name="Kappler J."/>
            <person name="Zhang G."/>
        </authorList>
    </citation>
    <scope>X-RAY CRYSTALLOGRAPHY (2.02 ANGSTROMS) OF 183-416 IN COMPLEX WITH 2-OXOGLUTARIC ACID; N(OMEGA)-METHYL-L-ARGININE AND SYMMETRICAL N(OMEGA),N'(OMEGA)-DIMETHYL-L-ARGININE</scope>
    <scope>MUTAGENESIS OF GLN-275 AND LYS-336</scope>
    <scope>FUNCTION</scope>
</reference>
<reference key="14">
    <citation type="journal article" date="2012" name="Mol. Cell. Biol.">
        <title>Crystal structure and functional analysis of JMJD5 indicate an alternate specificity and function.</title>
        <authorList>
            <person name="Del Rizzo P.A."/>
            <person name="Krishnan S."/>
            <person name="Trievel R.C."/>
        </authorList>
    </citation>
    <scope>X-RAY CRYSTALLOGRAPHY (1.05 ANGSTROMS) OF 183-416 IN COMPLEX WITH 2-OXOGLUTARATE AND COBALT</scope>
    <scope>FUNCTION</scope>
    <scope>CAUTION</scope>
</reference>
<reference key="15">
    <citation type="journal article" date="2013" name="Acta Crystallogr. D">
        <title>Structure of the JmjC-domain-containing protein JMJD5.</title>
        <authorList>
            <person name="Wang H."/>
            <person name="Zhou X."/>
            <person name="Wu M."/>
            <person name="Wang C."/>
            <person name="Zhang X."/>
            <person name="Tao Y."/>
            <person name="Chen N."/>
            <person name="Zang J."/>
        </authorList>
    </citation>
    <scope>X-RAY CRYSTALLOGRAPHY (2.81 ANGSTROMS) OF 176-416 IN COMPLEX WITH N-OXALGLYCINE AND NICKEL</scope>
    <scope>SUBUNIT</scope>
    <scope>COFACTOR</scope>
    <scope>CAUTION</scope>
</reference>
<accession>Q8N371</accession>
<accession>B4DLU9</accession>
<accession>Q6VAK5</accession>
<accession>Q9H8B1</accession>
<keyword id="KW-0002">3D-structure</keyword>
<keyword id="KW-0025">Alternative splicing</keyword>
<keyword id="KW-0031">Aminopeptidase</keyword>
<keyword id="KW-0090">Biological rhythms</keyword>
<keyword id="KW-0131">Cell cycle</keyword>
<keyword id="KW-0156">Chromatin regulator</keyword>
<keyword id="KW-0158">Chromosome</keyword>
<keyword id="KW-0223">Dioxygenase</keyword>
<keyword id="KW-0378">Hydrolase</keyword>
<keyword id="KW-0408">Iron</keyword>
<keyword id="KW-0479">Metal-binding</keyword>
<keyword id="KW-0539">Nucleus</keyword>
<keyword id="KW-0560">Oxidoreductase</keyword>
<keyword id="KW-0645">Protease</keyword>
<keyword id="KW-1267">Proteomics identification</keyword>
<keyword id="KW-1185">Reference proteome</keyword>
<keyword id="KW-0804">Transcription</keyword>
<keyword id="KW-0805">Transcription regulation</keyword>
<organism>
    <name type="scientific">Homo sapiens</name>
    <name type="common">Human</name>
    <dbReference type="NCBI Taxonomy" id="9606"/>
    <lineage>
        <taxon>Eukaryota</taxon>
        <taxon>Metazoa</taxon>
        <taxon>Chordata</taxon>
        <taxon>Craniata</taxon>
        <taxon>Vertebrata</taxon>
        <taxon>Euteleostomi</taxon>
        <taxon>Mammalia</taxon>
        <taxon>Eutheria</taxon>
        <taxon>Euarchontoglires</taxon>
        <taxon>Primates</taxon>
        <taxon>Haplorrhini</taxon>
        <taxon>Catarrhini</taxon>
        <taxon>Hominidae</taxon>
        <taxon>Homo</taxon>
    </lineage>
</organism>
<sequence length="416" mass="47270">MAGDTHCPAEPLAREGTLWEALRALLPHSKEDLKLDLGEKVERSVVTLLQRATELFYEGRRDECLQSSEVILDYSWEKLNTGTWQDVDKDWRRVYAIGCLLKALCLCQAPEDANTVAAALRVCDMGLLMGAAILGDILLKVAAILQTHLPGKRPARGSLPEQPCTKKARADHGLIPDVKLEKTVPRLHRPSLQHFREQFLVPGRPVILKGVADHWPCMQKWSLEYIQEIAGCRTVPVEVGSRYTDEEWSQTLMTVNEFISKYIVNEPRDVGYLAQHQLFDQIPELKQDISIPDYCSLGDGEEEEITINAWFGPQGTISPLHQDPQQNFLVQVMGRKYIRLYSPQESGALYPHDTHLLHNTSQVDVENPDLEKFPKFAKAPFLSCILSPGEILFIPVKYWHYVRALDLSFSVSFWWS</sequence>
<evidence type="ECO:0000250" key="1">
    <source>
        <dbReference type="UniProtKB" id="Q9CXT6"/>
    </source>
</evidence>
<evidence type="ECO:0000255" key="2">
    <source>
        <dbReference type="PROSITE-ProRule" id="PRU00538"/>
    </source>
</evidence>
<evidence type="ECO:0000269" key="3">
    <source>
    </source>
</evidence>
<evidence type="ECO:0000269" key="4">
    <source>
    </source>
</evidence>
<evidence type="ECO:0000269" key="5">
    <source>
    </source>
</evidence>
<evidence type="ECO:0000269" key="6">
    <source>
    </source>
</evidence>
<evidence type="ECO:0000269" key="7">
    <source>
    </source>
</evidence>
<evidence type="ECO:0000269" key="8">
    <source>
    </source>
</evidence>
<evidence type="ECO:0000269" key="9">
    <source>
    </source>
</evidence>
<evidence type="ECO:0000269" key="10">
    <source>
    </source>
</evidence>
<evidence type="ECO:0000269" key="11">
    <source>
    </source>
</evidence>
<evidence type="ECO:0000269" key="12">
    <source>
    </source>
</evidence>
<evidence type="ECO:0000269" key="13">
    <source>
    </source>
</evidence>
<evidence type="ECO:0000303" key="14">
    <source>
    </source>
</evidence>
<evidence type="ECO:0000303" key="15">
    <source>
    </source>
</evidence>
<evidence type="ECO:0000303" key="16">
    <source>
    </source>
</evidence>
<evidence type="ECO:0000303" key="17">
    <source>
    </source>
</evidence>
<evidence type="ECO:0000303" key="18">
    <source>
    </source>
</evidence>
<evidence type="ECO:0000303" key="19">
    <source ref="2"/>
</evidence>
<evidence type="ECO:0000305" key="20"/>
<evidence type="ECO:0000305" key="21">
    <source>
    </source>
</evidence>
<evidence type="ECO:0000305" key="22">
    <source>
    </source>
</evidence>
<evidence type="ECO:0000305" key="23">
    <source>
    </source>
</evidence>
<evidence type="ECO:0000305" key="24">
    <source>
    </source>
</evidence>
<evidence type="ECO:0000305" key="25">
    <source>
    </source>
</evidence>
<evidence type="ECO:0000312" key="26">
    <source>
        <dbReference type="HGNC" id="HGNC:25840"/>
    </source>
</evidence>
<evidence type="ECO:0007744" key="27">
    <source>
        <dbReference type="PDB" id="3UYJ"/>
    </source>
</evidence>
<evidence type="ECO:0007744" key="28">
    <source>
        <dbReference type="PDB" id="4GJY"/>
    </source>
</evidence>
<evidence type="ECO:0007744" key="29">
    <source>
        <dbReference type="PDB" id="4GJZ"/>
    </source>
</evidence>
<evidence type="ECO:0007744" key="30">
    <source>
        <dbReference type="PDB" id="4QU1"/>
    </source>
</evidence>
<evidence type="ECO:0007744" key="31">
    <source>
        <dbReference type="PDB" id="5FBJ"/>
    </source>
</evidence>
<evidence type="ECO:0007829" key="32">
    <source>
        <dbReference type="PDB" id="3UYJ"/>
    </source>
</evidence>
<evidence type="ECO:0007829" key="33">
    <source>
        <dbReference type="PDB" id="4AAP"/>
    </source>
</evidence>
<evidence type="ECO:0007829" key="34">
    <source>
        <dbReference type="PDB" id="4GJZ"/>
    </source>
</evidence>
<evidence type="ECO:0007829" key="35">
    <source>
        <dbReference type="PDB" id="6F4Q"/>
    </source>
</evidence>
<comment type="function">
    <text evidence="1 3 6 7 8 9 10 11 12 13">Bifunctional enzyme that acts both as an endopeptidase and 2-oxoglutarate-dependent monooxygenase (PubMed:28847961, PubMed:28982940, PubMed:29459673, PubMed:29563586). Endopeptidase that cleaves histones N-terminal tails at the carboxyl side of methylated arginine or lysine residues, to generate 'tailless nucleosomes', which may trigger transcription elongation (PubMed:28847961, PubMed:28982940, PubMed:29459673). Preferentially recognizes and cleaves monomethylated and dimethylated arginine residues of histones H2, H3 and H4. After initial cleavage, continues to digest histones tails via its aminopeptidase activity (PubMed:28847961, PubMed:29459673). Upon DNA damage, cleaves the N-terminal tail of histone H3 at monomethylated lysine residues, preferably at monomethylated 'Lys-9' (H3K9me1). The histone variant H3F3A is the major target for cleavage (PubMed:28982940). Additionally, acts as a Fe(2+) and 2-oxoglutarate-dependent monooxygenase, catalyzing (R)-stereospecific hydroxylation at C-3 of 'Arg-137' of RPS6 and 'Arg-141' of RCCD1, but the biological significance of this activity remains to be established (PubMed:29563586). Regulates mitosis through different mechanisms: Plays a role in transcriptional repression of satellite repeats, possibly by regulating H3K36 methylation levels in centromeric regions together with RCCD1. Possibly together with RCCD1, is involved in proper mitotic spindle organization and chromosome segregation (PubMed:24981860). Negatively regulates cell cycle repressor CDKN1A/p21, which controls G1/S phase transition (PubMed:24740926). Required for G2/M phase cell cycle progression. Regulates expression of CCNA1/cyclin-A1, leading to cancer cell proliferation (PubMed:20457893). Also, plays a role in regulating alpha-tubulin acetylation and cytoskeletal microtubule stability involved in epithelial to mesenchymal transition (PubMed:28455245). Regulates the circadian gene expression in the liver (By similarity). Represses the transcriptional activator activity of the CLOCK-BMAL1 heterodimer in a catalytically-independent manner (PubMed:30500822). Negatively regulates the protein stability and function of CRY1; required for AMPK-FBXL3-induced CRY1 degradation (PubMed:30500822).</text>
</comment>
<comment type="catalytic activity">
    <reaction evidence="12">
        <text>L-arginyl-[protein] + 2-oxoglutarate + O2 = (3R)-3-hydroxy-L-arginyl-[protein] + succinate + CO2</text>
        <dbReference type="Rhea" id="RHEA:56744"/>
        <dbReference type="Rhea" id="RHEA-COMP:10532"/>
        <dbReference type="Rhea" id="RHEA-COMP:14712"/>
        <dbReference type="ChEBI" id="CHEBI:15379"/>
        <dbReference type="ChEBI" id="CHEBI:16526"/>
        <dbReference type="ChEBI" id="CHEBI:16810"/>
        <dbReference type="ChEBI" id="CHEBI:29965"/>
        <dbReference type="ChEBI" id="CHEBI:30031"/>
        <dbReference type="ChEBI" id="CHEBI:78294"/>
        <dbReference type="EC" id="1.14.11.73"/>
    </reaction>
</comment>
<comment type="cofactor">
    <cofactor evidence="7 10 12">
        <name>Fe(2+)</name>
        <dbReference type="ChEBI" id="CHEBI:29033"/>
    </cofactor>
    <text evidence="22">Binds 1 Fe(2+) ion per subunit.</text>
</comment>
<comment type="biophysicochemical properties">
    <kinetics>
        <KM evidence="12">60.4 uM for Arg-137 of RPS6</KM>
        <text evidence="12">KM&gt;300 uM for Arg-141 of RCCD1.</text>
    </kinetics>
</comment>
<comment type="subunit">
    <text evidence="1 5 7 8 10">Can form homodimers (via JmjC domain) (PubMed:24100311, PubMed:28982940). Found in a complex with RCCD1 (PubMed:24981860). Interacts (via N-terminus) with RCCD1 (via N-terminus); this interaction stimulates H3K36me3 and H3K36me2 demethylation (PubMed:24981860, PubMed:28455245). Interacts (via JmjC domain) with H3C1 (PubMed:28982940). Interacts with FBXL3 and PSMD2 (By similarity). Interacts with CRY1 in a FBXL3-dependent manner (By similarity).</text>
</comment>
<comment type="interaction">
    <interactant intactId="EBI-750326">
        <id>Q8N371</id>
    </interactant>
    <interactant intactId="EBI-21552314">
        <id>A6NED2</id>
        <label>RCCD1</label>
    </interactant>
    <organismsDiffer>false</organismsDiffer>
    <experiments>4</experiments>
</comment>
<comment type="interaction">
    <interactant intactId="EBI-12161375">
        <id>Q8N371-3</id>
    </interactant>
    <interactant intactId="EBI-742054">
        <id>Q96D03</id>
        <label>DDIT4L</label>
    </interactant>
    <organismsDiffer>false</organismsDiffer>
    <experiments>3</experiments>
</comment>
<comment type="interaction">
    <interactant intactId="EBI-12161375">
        <id>Q8N371-3</id>
    </interactant>
    <interactant intactId="EBI-9091197">
        <id>Q8IY31-3</id>
        <label>IFT20</label>
    </interactant>
    <organismsDiffer>false</organismsDiffer>
    <experiments>3</experiments>
</comment>
<comment type="interaction">
    <interactant intactId="EBI-12161375">
        <id>Q8N371-3</id>
    </interactant>
    <interactant intactId="EBI-2557660">
        <id>Q9ULR0</id>
        <label>ISY1</label>
    </interactant>
    <organismsDiffer>false</organismsDiffer>
    <experiments>5</experiments>
</comment>
<comment type="interaction">
    <interactant intactId="EBI-12161375">
        <id>Q8N371-3</id>
    </interactant>
    <interactant intactId="EBI-16439278">
        <id>Q6FHY5</id>
        <label>MEOX2</label>
    </interactant>
    <organismsDiffer>false</organismsDiffer>
    <experiments>6</experiments>
</comment>
<comment type="interaction">
    <interactant intactId="EBI-12161375">
        <id>Q8N371-3</id>
    </interactant>
    <interactant intactId="EBI-12852610">
        <id>Q8TB37</id>
        <label>NUBPL</label>
    </interactant>
    <organismsDiffer>false</organismsDiffer>
    <experiments>3</experiments>
</comment>
<comment type="subcellular location">
    <subcellularLocation>
        <location evidence="3 10">Nucleus</location>
    </subcellularLocation>
    <subcellularLocation>
        <location evidence="7">Chromosome</location>
    </subcellularLocation>
    <text evidence="7">Colocalizes with trimethylated 'Lys-9' of histone H3 (H3K9me3).</text>
</comment>
<comment type="alternative products">
    <event type="alternative splicing"/>
    <isoform>
        <id>Q8N371-1</id>
        <name>1</name>
        <sequence type="displayed"/>
    </isoform>
    <isoform>
        <id>Q8N371-2</id>
        <name>2</name>
        <sequence type="described" ref="VSP_026370"/>
    </isoform>
    <isoform>
        <id>Q8N371-3</id>
        <name>3</name>
        <sequence type="described" ref="VSP_039893"/>
    </isoform>
</comment>
<comment type="tissue specificity">
    <text evidence="3 6">Weakly expressed in most cells. Highly expressed in breast cancer cells (PubMed:20457893). Expressed in embryonic stem cells (PubMed:24740926).</text>
</comment>
<comment type="induction">
    <text evidence="10">Up-regulated upon starvation, DNA replication stress, UV treatment and by camptothecin and etoposide treatment.</text>
</comment>
<comment type="caution">
    <text evidence="3 4 5 7 10">The demethylase activity of JMJD5 is controversial. Demethylase activity toward H3K36me2 was observed in vivo and in vitro (PubMed:20457893). In addition, demethylase activity toward H3K36me3 when in a complex with RCCD1 has been observed (PubMed:24981860). In contrast, in other studies, JMJD5 was shown not to display any demethylase activity toward methylated H3K36 nor toward other methyllysines in the N-terminal tails of H3 and H4 in vitro (PubMed:22851697, PubMed:24100311, PubMed:28982940).</text>
</comment>
<name>KDM8_HUMAN</name>